<keyword id="KW-0997">Cell inner membrane</keyword>
<keyword id="KW-1003">Cell membrane</keyword>
<keyword id="KW-0406">Ion transport</keyword>
<keyword id="KW-0472">Membrane</keyword>
<keyword id="KW-0630">Potassium</keyword>
<keyword id="KW-0633">Potassium transport</keyword>
<keyword id="KW-0769">Symport</keyword>
<keyword id="KW-0812">Transmembrane</keyword>
<keyword id="KW-1133">Transmembrane helix</keyword>
<keyword id="KW-0813">Transport</keyword>
<evidence type="ECO:0000255" key="1">
    <source>
        <dbReference type="HAMAP-Rule" id="MF_01522"/>
    </source>
</evidence>
<comment type="function">
    <text evidence="1">Transport of potassium into the cell. Likely operates as a K(+):H(+) symporter.</text>
</comment>
<comment type="catalytic activity">
    <reaction evidence="1">
        <text>K(+)(in) + H(+)(in) = K(+)(out) + H(+)(out)</text>
        <dbReference type="Rhea" id="RHEA:28490"/>
        <dbReference type="ChEBI" id="CHEBI:15378"/>
        <dbReference type="ChEBI" id="CHEBI:29103"/>
    </reaction>
    <physiologicalReaction direction="right-to-left" evidence="1">
        <dbReference type="Rhea" id="RHEA:28492"/>
    </physiologicalReaction>
</comment>
<comment type="subcellular location">
    <subcellularLocation>
        <location evidence="1">Cell inner membrane</location>
        <topology evidence="1">Multi-pass membrane protein</topology>
    </subcellularLocation>
</comment>
<comment type="similarity">
    <text evidence="1">Belongs to the HAK/KUP transporter (TC 2.A.72) family.</text>
</comment>
<organism>
    <name type="scientific">Brucella abortus (strain S19)</name>
    <dbReference type="NCBI Taxonomy" id="430066"/>
    <lineage>
        <taxon>Bacteria</taxon>
        <taxon>Pseudomonadati</taxon>
        <taxon>Pseudomonadota</taxon>
        <taxon>Alphaproteobacteria</taxon>
        <taxon>Hyphomicrobiales</taxon>
        <taxon>Brucellaceae</taxon>
        <taxon>Brucella/Ochrobactrum group</taxon>
        <taxon>Brucella</taxon>
    </lineage>
</organism>
<gene>
    <name evidence="1" type="primary">kup</name>
    <name type="ordered locus">BAbS19_I13100</name>
</gene>
<proteinExistence type="inferred from homology"/>
<feature type="chain" id="PRO_1000190260" description="Probable potassium transport system protein Kup">
    <location>
        <begin position="1"/>
        <end position="651"/>
    </location>
</feature>
<feature type="transmembrane region" description="Helical" evidence="1">
    <location>
        <begin position="41"/>
        <end position="61"/>
    </location>
</feature>
<feature type="transmembrane region" description="Helical" evidence="1">
    <location>
        <begin position="82"/>
        <end position="102"/>
    </location>
</feature>
<feature type="transmembrane region" description="Helical" evidence="1">
    <location>
        <begin position="130"/>
        <end position="150"/>
    </location>
</feature>
<feature type="transmembrane region" description="Helical" evidence="1">
    <location>
        <begin position="163"/>
        <end position="183"/>
    </location>
</feature>
<feature type="transmembrane region" description="Helical" evidence="1">
    <location>
        <begin position="194"/>
        <end position="214"/>
    </location>
</feature>
<feature type="transmembrane region" description="Helical" evidence="1">
    <location>
        <begin position="235"/>
        <end position="255"/>
    </location>
</feature>
<feature type="transmembrane region" description="Helical" evidence="1">
    <location>
        <begin position="276"/>
        <end position="296"/>
    </location>
</feature>
<feature type="transmembrane region" description="Helical" evidence="1">
    <location>
        <begin position="309"/>
        <end position="329"/>
    </location>
</feature>
<feature type="transmembrane region" description="Helical" evidence="1">
    <location>
        <begin position="366"/>
        <end position="386"/>
    </location>
</feature>
<feature type="transmembrane region" description="Helical" evidence="1">
    <location>
        <begin position="395"/>
        <end position="415"/>
    </location>
</feature>
<feature type="transmembrane region" description="Helical" evidence="1">
    <location>
        <begin position="426"/>
        <end position="446"/>
    </location>
</feature>
<feature type="transmembrane region" description="Helical" evidence="1">
    <location>
        <begin position="450"/>
        <end position="470"/>
    </location>
</feature>
<protein>
    <recommendedName>
        <fullName evidence="1">Probable potassium transport system protein Kup</fullName>
    </recommendedName>
</protein>
<dbReference type="EMBL" id="CP000887">
    <property type="protein sequence ID" value="ACD72805.1"/>
    <property type="molecule type" value="Genomic_DNA"/>
</dbReference>
<dbReference type="RefSeq" id="WP_002964493.1">
    <property type="nucleotide sequence ID" value="NC_010742.1"/>
</dbReference>
<dbReference type="KEGG" id="bmc:BAbS19_I13100"/>
<dbReference type="HOGENOM" id="CLU_008142_4_2_5"/>
<dbReference type="Proteomes" id="UP000002565">
    <property type="component" value="Chromosome 1"/>
</dbReference>
<dbReference type="GO" id="GO:0005886">
    <property type="term" value="C:plasma membrane"/>
    <property type="evidence" value="ECO:0007669"/>
    <property type="project" value="UniProtKB-SubCell"/>
</dbReference>
<dbReference type="GO" id="GO:0015079">
    <property type="term" value="F:potassium ion transmembrane transporter activity"/>
    <property type="evidence" value="ECO:0007669"/>
    <property type="project" value="UniProtKB-UniRule"/>
</dbReference>
<dbReference type="GO" id="GO:0015293">
    <property type="term" value="F:symporter activity"/>
    <property type="evidence" value="ECO:0007669"/>
    <property type="project" value="UniProtKB-UniRule"/>
</dbReference>
<dbReference type="HAMAP" id="MF_01522">
    <property type="entry name" value="Kup"/>
    <property type="match status" value="1"/>
</dbReference>
<dbReference type="InterPro" id="IPR003855">
    <property type="entry name" value="K+_transporter"/>
</dbReference>
<dbReference type="InterPro" id="IPR053952">
    <property type="entry name" value="K_trans_C"/>
</dbReference>
<dbReference type="InterPro" id="IPR053951">
    <property type="entry name" value="K_trans_N"/>
</dbReference>
<dbReference type="InterPro" id="IPR023051">
    <property type="entry name" value="Kup"/>
</dbReference>
<dbReference type="PANTHER" id="PTHR30540:SF79">
    <property type="entry name" value="LOW AFFINITY POTASSIUM TRANSPORT SYSTEM PROTEIN KUP"/>
    <property type="match status" value="1"/>
</dbReference>
<dbReference type="PANTHER" id="PTHR30540">
    <property type="entry name" value="OSMOTIC STRESS POTASSIUM TRANSPORTER"/>
    <property type="match status" value="1"/>
</dbReference>
<dbReference type="Pfam" id="PF02705">
    <property type="entry name" value="K_trans"/>
    <property type="match status" value="1"/>
</dbReference>
<dbReference type="Pfam" id="PF22776">
    <property type="entry name" value="K_trans_C"/>
    <property type="match status" value="1"/>
</dbReference>
<accession>B2S6K8</accession>
<reference key="1">
    <citation type="journal article" date="2008" name="PLoS ONE">
        <title>Genome sequence of Brucella abortus vaccine strain S19 compared to virulent strains yields candidate virulence genes.</title>
        <authorList>
            <person name="Crasta O.R."/>
            <person name="Folkerts O."/>
            <person name="Fei Z."/>
            <person name="Mane S.P."/>
            <person name="Evans C."/>
            <person name="Martino-Catt S."/>
            <person name="Bricker B."/>
            <person name="Yu G."/>
            <person name="Du L."/>
            <person name="Sobral B.W."/>
        </authorList>
    </citation>
    <scope>NUCLEOTIDE SEQUENCE [LARGE SCALE GENOMIC DNA]</scope>
    <source>
        <strain>S19</strain>
    </source>
</reference>
<sequence>MSGELNGNDTSAQAAVSAGSVLEGAAFADEGEQHNESMKTLVLGALGVVYGDIGTSPIYAFREALHAAATNGILARSDILGVVSLIFWALTLVVTVKYVLFVLRADNNGEGGILSLMALVRGALKGRPDLILGVGICGAALFFGDAVITPAISVLSAMEGLEIVAPNLTPFVVPAAVVILVTLFSVQKLGTGRVAIVFGPIMALWFVALGASGLWHIFDDPTVMAALNPYYAVRFLTVSPAVAFVTVGAVFLAMTGAEALYADLGHFGRKPIVRAWLWIVFPCLLLNYFGQAAFILSHGEAAALPFFQMIPSFALWPMVLLATAATVIASQAVITGAYSVARQAVQLNILPRLEIQHTSEKLHGQIYIPRVNLLLGLAVVILVLGFEKSSNLAAAYGIAVTGNMLVTTVLLYIAMTRIWNWRVSRALPIILGFLVIDMLFFSANIIKVHEGGWASIGIATVLVLIMWTWVRGTRHLFQKTRKAEVPLDLIVEQMAKRPPTIVPGTAVFLTGDPKSAPTALMHSLKHYKVLHENNVILTVVTASKPWVASADRARVSQYNERFMLVTLTFGYMQQPNIPRALGLCRRLGWKFDIMTTSFFLSRRSLKASVHSGMPLWQDKLFILLARTASDATEYFQIPTGRVVEIGTQVNI</sequence>
<name>KUP_BRUA1</name>